<keyword id="KW-0067">ATP-binding</keyword>
<keyword id="KW-0093">Biotin biosynthesis</keyword>
<keyword id="KW-0963">Cytoplasm</keyword>
<keyword id="KW-0436">Ligase</keyword>
<keyword id="KW-0460">Magnesium</keyword>
<keyword id="KW-0479">Metal-binding</keyword>
<keyword id="KW-0547">Nucleotide-binding</keyword>
<feature type="chain" id="PRO_0000302522" description="ATP-dependent dethiobiotin synthetase BioD">
    <location>
        <begin position="1"/>
        <end position="234"/>
    </location>
</feature>
<feature type="active site" evidence="1">
    <location>
        <position position="39"/>
    </location>
</feature>
<feature type="binding site" evidence="1">
    <location>
        <begin position="14"/>
        <end position="19"/>
    </location>
    <ligand>
        <name>ATP</name>
        <dbReference type="ChEBI" id="CHEBI:30616"/>
    </ligand>
</feature>
<feature type="binding site" evidence="1">
    <location>
        <position position="18"/>
    </location>
    <ligand>
        <name>Mg(2+)</name>
        <dbReference type="ChEBI" id="CHEBI:18420"/>
    </ligand>
</feature>
<feature type="binding site" evidence="1">
    <location>
        <position position="43"/>
    </location>
    <ligand>
        <name>substrate</name>
    </ligand>
</feature>
<feature type="binding site" evidence="1">
    <location>
        <position position="56"/>
    </location>
    <ligand>
        <name>ATP</name>
        <dbReference type="ChEBI" id="CHEBI:30616"/>
    </ligand>
</feature>
<feature type="binding site" evidence="1">
    <location>
        <position position="56"/>
    </location>
    <ligand>
        <name>Mg(2+)</name>
        <dbReference type="ChEBI" id="CHEBI:18420"/>
    </ligand>
</feature>
<feature type="binding site" evidence="1">
    <location>
        <begin position="118"/>
        <end position="121"/>
    </location>
    <ligand>
        <name>ATP</name>
        <dbReference type="ChEBI" id="CHEBI:30616"/>
    </ligand>
</feature>
<feature type="binding site" evidence="1">
    <location>
        <position position="118"/>
    </location>
    <ligand>
        <name>Mg(2+)</name>
        <dbReference type="ChEBI" id="CHEBI:18420"/>
    </ligand>
</feature>
<feature type="binding site" evidence="1">
    <location>
        <begin position="178"/>
        <end position="179"/>
    </location>
    <ligand>
        <name>ATP</name>
        <dbReference type="ChEBI" id="CHEBI:30616"/>
    </ligand>
</feature>
<feature type="binding site" evidence="1">
    <location>
        <begin position="208"/>
        <end position="210"/>
    </location>
    <ligand>
        <name>ATP</name>
        <dbReference type="ChEBI" id="CHEBI:30616"/>
    </ligand>
</feature>
<sequence length="234" mass="24936">MAKHTFFVTGTDTGVGKTIVSAAILEAAKAAGKRTLAMKPIASGCDQTPEGLRNEDALMLQAAITEKLPYDTINPIALEPAIAPHVAAQQAGKQVTAQRIVGFCRGMQIRPADLLLIEGAGGWRVPLNDRETYAAVPGELKLPVILVVPLQLGCINHAMLSAEAIRADGLVVAGWVGNHPEEQVMSCEQDTLNYLSTHLGAPCLGVLPWLENTDTAEMPAILSRYLNITPLIEN</sequence>
<gene>
    <name evidence="1" type="primary">bioD</name>
    <name type="ordered locus">Maqu_2753</name>
</gene>
<evidence type="ECO:0000255" key="1">
    <source>
        <dbReference type="HAMAP-Rule" id="MF_00336"/>
    </source>
</evidence>
<dbReference type="EC" id="6.3.3.3" evidence="1"/>
<dbReference type="EMBL" id="CP000514">
    <property type="protein sequence ID" value="ABM19828.1"/>
    <property type="molecule type" value="Genomic_DNA"/>
</dbReference>
<dbReference type="RefSeq" id="WP_011786198.1">
    <property type="nucleotide sequence ID" value="NC_008740.1"/>
</dbReference>
<dbReference type="SMR" id="A1U4A9"/>
<dbReference type="STRING" id="351348.Maqu_2753"/>
<dbReference type="KEGG" id="maq:Maqu_2753"/>
<dbReference type="eggNOG" id="COG0132">
    <property type="taxonomic scope" value="Bacteria"/>
</dbReference>
<dbReference type="HOGENOM" id="CLU_072551_0_0_6"/>
<dbReference type="OrthoDB" id="9802097at2"/>
<dbReference type="UniPathway" id="UPA00078">
    <property type="reaction ID" value="UER00161"/>
</dbReference>
<dbReference type="Proteomes" id="UP000000998">
    <property type="component" value="Chromosome"/>
</dbReference>
<dbReference type="GO" id="GO:0005829">
    <property type="term" value="C:cytosol"/>
    <property type="evidence" value="ECO:0007669"/>
    <property type="project" value="TreeGrafter"/>
</dbReference>
<dbReference type="GO" id="GO:0005524">
    <property type="term" value="F:ATP binding"/>
    <property type="evidence" value="ECO:0007669"/>
    <property type="project" value="UniProtKB-UniRule"/>
</dbReference>
<dbReference type="GO" id="GO:0004141">
    <property type="term" value="F:dethiobiotin synthase activity"/>
    <property type="evidence" value="ECO:0007669"/>
    <property type="project" value="UniProtKB-UniRule"/>
</dbReference>
<dbReference type="GO" id="GO:0000287">
    <property type="term" value="F:magnesium ion binding"/>
    <property type="evidence" value="ECO:0007669"/>
    <property type="project" value="UniProtKB-UniRule"/>
</dbReference>
<dbReference type="GO" id="GO:0009102">
    <property type="term" value="P:biotin biosynthetic process"/>
    <property type="evidence" value="ECO:0007669"/>
    <property type="project" value="UniProtKB-UniRule"/>
</dbReference>
<dbReference type="CDD" id="cd03109">
    <property type="entry name" value="DTBS"/>
    <property type="match status" value="1"/>
</dbReference>
<dbReference type="FunFam" id="3.40.50.300:FF:000292">
    <property type="entry name" value="ATP-dependent dethiobiotin synthetase BioD"/>
    <property type="match status" value="1"/>
</dbReference>
<dbReference type="Gene3D" id="3.40.50.300">
    <property type="entry name" value="P-loop containing nucleotide triphosphate hydrolases"/>
    <property type="match status" value="1"/>
</dbReference>
<dbReference type="HAMAP" id="MF_00336">
    <property type="entry name" value="BioD"/>
    <property type="match status" value="1"/>
</dbReference>
<dbReference type="InterPro" id="IPR004472">
    <property type="entry name" value="DTB_synth_BioD"/>
</dbReference>
<dbReference type="InterPro" id="IPR027417">
    <property type="entry name" value="P-loop_NTPase"/>
</dbReference>
<dbReference type="NCBIfam" id="TIGR00347">
    <property type="entry name" value="bioD"/>
    <property type="match status" value="1"/>
</dbReference>
<dbReference type="PANTHER" id="PTHR43210">
    <property type="entry name" value="DETHIOBIOTIN SYNTHETASE"/>
    <property type="match status" value="1"/>
</dbReference>
<dbReference type="PANTHER" id="PTHR43210:SF5">
    <property type="entry name" value="DETHIOBIOTIN SYNTHETASE"/>
    <property type="match status" value="1"/>
</dbReference>
<dbReference type="Pfam" id="PF13500">
    <property type="entry name" value="AAA_26"/>
    <property type="match status" value="1"/>
</dbReference>
<dbReference type="PIRSF" id="PIRSF006755">
    <property type="entry name" value="DTB_synth"/>
    <property type="match status" value="1"/>
</dbReference>
<dbReference type="SUPFAM" id="SSF52540">
    <property type="entry name" value="P-loop containing nucleoside triphosphate hydrolases"/>
    <property type="match status" value="1"/>
</dbReference>
<reference key="1">
    <citation type="journal article" date="2011" name="Appl. Environ. Microbiol.">
        <title>Genomic potential of Marinobacter aquaeolei, a biogeochemical 'opportunitroph'.</title>
        <authorList>
            <person name="Singer E."/>
            <person name="Webb E.A."/>
            <person name="Nelson W.C."/>
            <person name="Heidelberg J.F."/>
            <person name="Ivanova N."/>
            <person name="Pati A."/>
            <person name="Edwards K.J."/>
        </authorList>
    </citation>
    <scope>NUCLEOTIDE SEQUENCE [LARGE SCALE GENOMIC DNA]</scope>
    <source>
        <strain>ATCC 700491 / DSM 11845 / VT8</strain>
    </source>
</reference>
<protein>
    <recommendedName>
        <fullName evidence="1">ATP-dependent dethiobiotin synthetase BioD</fullName>
        <ecNumber evidence="1">6.3.3.3</ecNumber>
    </recommendedName>
    <alternativeName>
        <fullName evidence="1">DTB synthetase</fullName>
        <shortName evidence="1">DTBS</shortName>
    </alternativeName>
    <alternativeName>
        <fullName evidence="1">Dethiobiotin synthase</fullName>
    </alternativeName>
</protein>
<name>BIOD_MARN8</name>
<comment type="function">
    <text evidence="1">Catalyzes a mechanistically unusual reaction, the ATP-dependent insertion of CO2 between the N7 and N8 nitrogen atoms of 7,8-diaminopelargonic acid (DAPA, also called 7,8-diammoniononanoate) to form a ureido ring.</text>
</comment>
<comment type="catalytic activity">
    <reaction evidence="1">
        <text>(7R,8S)-7,8-diammoniononanoate + CO2 + ATP = (4R,5S)-dethiobiotin + ADP + phosphate + 3 H(+)</text>
        <dbReference type="Rhea" id="RHEA:15805"/>
        <dbReference type="ChEBI" id="CHEBI:15378"/>
        <dbReference type="ChEBI" id="CHEBI:16526"/>
        <dbReference type="ChEBI" id="CHEBI:30616"/>
        <dbReference type="ChEBI" id="CHEBI:43474"/>
        <dbReference type="ChEBI" id="CHEBI:149469"/>
        <dbReference type="ChEBI" id="CHEBI:149473"/>
        <dbReference type="ChEBI" id="CHEBI:456216"/>
        <dbReference type="EC" id="6.3.3.3"/>
    </reaction>
</comment>
<comment type="cofactor">
    <cofactor evidence="1">
        <name>Mg(2+)</name>
        <dbReference type="ChEBI" id="CHEBI:18420"/>
    </cofactor>
</comment>
<comment type="pathway">
    <text evidence="1">Cofactor biosynthesis; biotin biosynthesis; biotin from 7,8-diaminononanoate: step 1/2.</text>
</comment>
<comment type="subunit">
    <text evidence="1">Homodimer.</text>
</comment>
<comment type="subcellular location">
    <subcellularLocation>
        <location evidence="1">Cytoplasm</location>
    </subcellularLocation>
</comment>
<comment type="similarity">
    <text evidence="1">Belongs to the dethiobiotin synthetase family.</text>
</comment>
<organism>
    <name type="scientific">Marinobacter nauticus (strain ATCC 700491 / DSM 11845 / VT8)</name>
    <name type="common">Marinobacter aquaeolei</name>
    <dbReference type="NCBI Taxonomy" id="351348"/>
    <lineage>
        <taxon>Bacteria</taxon>
        <taxon>Pseudomonadati</taxon>
        <taxon>Pseudomonadota</taxon>
        <taxon>Gammaproteobacteria</taxon>
        <taxon>Pseudomonadales</taxon>
        <taxon>Marinobacteraceae</taxon>
        <taxon>Marinobacter</taxon>
    </lineage>
</organism>
<accession>A1U4A9</accession>
<proteinExistence type="inferred from homology"/>